<proteinExistence type="inferred from homology"/>
<reference key="1">
    <citation type="submission" date="2009-02" db="EMBL/GenBank/DDBJ databases">
        <title>Vibrio splendidus str. LGP32 complete genome.</title>
        <authorList>
            <person name="Mazel D."/>
            <person name="Le Roux F."/>
        </authorList>
    </citation>
    <scope>NUCLEOTIDE SEQUENCE [LARGE SCALE GENOMIC DNA]</scope>
    <source>
        <strain>LGP32</strain>
    </source>
</reference>
<sequence>MSNTDNIFSAPIDKIGDFTFDARVAEVFPDMIQRSVPGYSNIISAIGMLAERFVKPHSNIYDLGCSLGAATLSMRRHIQQEGCTIFAIDNSEAMVERCKLHVNAYRSDTPVEVIEADIREVEIKDASVVVLNFTLQFLSPDDRYALLEKIHAGLRPGGILILSEKYVFEDESSNELLIDLHHDFKRANGYSELEVSQKRSAIENVMRPDSITVHKQRFEKIGFSSSEVWFQCFNFGSMFAIK</sequence>
<dbReference type="EC" id="2.1.3.-" evidence="1"/>
<dbReference type="EMBL" id="FM954972">
    <property type="protein sequence ID" value="CAV18228.1"/>
    <property type="molecule type" value="Genomic_DNA"/>
</dbReference>
<dbReference type="SMR" id="B7VMH8"/>
<dbReference type="STRING" id="575788.VS_1102"/>
<dbReference type="KEGG" id="vsp:VS_1102"/>
<dbReference type="PATRIC" id="fig|575788.5.peg.2425"/>
<dbReference type="eggNOG" id="COG4106">
    <property type="taxonomic scope" value="Bacteria"/>
</dbReference>
<dbReference type="HOGENOM" id="CLU_078475_0_0_6"/>
<dbReference type="Proteomes" id="UP000009100">
    <property type="component" value="Chromosome 1"/>
</dbReference>
<dbReference type="GO" id="GO:0016743">
    <property type="term" value="F:carboxyl- or carbamoyltransferase activity"/>
    <property type="evidence" value="ECO:0007669"/>
    <property type="project" value="UniProtKB-UniRule"/>
</dbReference>
<dbReference type="GO" id="GO:1904047">
    <property type="term" value="F:S-adenosyl-L-methionine binding"/>
    <property type="evidence" value="ECO:0007669"/>
    <property type="project" value="UniProtKB-UniRule"/>
</dbReference>
<dbReference type="GO" id="GO:0002098">
    <property type="term" value="P:tRNA wobble uridine modification"/>
    <property type="evidence" value="ECO:0007669"/>
    <property type="project" value="InterPro"/>
</dbReference>
<dbReference type="CDD" id="cd02440">
    <property type="entry name" value="AdoMet_MTases"/>
    <property type="match status" value="1"/>
</dbReference>
<dbReference type="Gene3D" id="3.40.50.150">
    <property type="entry name" value="Vaccinia Virus protein VP39"/>
    <property type="match status" value="1"/>
</dbReference>
<dbReference type="HAMAP" id="MF_01589">
    <property type="entry name" value="Cx_SAM_synthase"/>
    <property type="match status" value="1"/>
</dbReference>
<dbReference type="InterPro" id="IPR005271">
    <property type="entry name" value="CmoA"/>
</dbReference>
<dbReference type="InterPro" id="IPR041698">
    <property type="entry name" value="Methyltransf_25"/>
</dbReference>
<dbReference type="InterPro" id="IPR029063">
    <property type="entry name" value="SAM-dependent_MTases_sf"/>
</dbReference>
<dbReference type="NCBIfam" id="TIGR00740">
    <property type="entry name" value="carboxy-S-adenosyl-L-methionine synthase CmoA"/>
    <property type="match status" value="1"/>
</dbReference>
<dbReference type="NCBIfam" id="NF011995">
    <property type="entry name" value="PRK15451.1"/>
    <property type="match status" value="1"/>
</dbReference>
<dbReference type="PANTHER" id="PTHR43861:SF2">
    <property type="entry name" value="CARBOXY-S-ADENOSYL-L-METHIONINE SYNTHASE"/>
    <property type="match status" value="1"/>
</dbReference>
<dbReference type="PANTHER" id="PTHR43861">
    <property type="entry name" value="TRANS-ACONITATE 2-METHYLTRANSFERASE-RELATED"/>
    <property type="match status" value="1"/>
</dbReference>
<dbReference type="Pfam" id="PF13649">
    <property type="entry name" value="Methyltransf_25"/>
    <property type="match status" value="1"/>
</dbReference>
<dbReference type="PIRSF" id="PIRSF006325">
    <property type="entry name" value="MeTrfase_bac"/>
    <property type="match status" value="1"/>
</dbReference>
<dbReference type="SUPFAM" id="SSF53335">
    <property type="entry name" value="S-adenosyl-L-methionine-dependent methyltransferases"/>
    <property type="match status" value="1"/>
</dbReference>
<evidence type="ECO:0000255" key="1">
    <source>
        <dbReference type="HAMAP-Rule" id="MF_01589"/>
    </source>
</evidence>
<gene>
    <name evidence="1" type="primary">cmoA</name>
    <name type="ordered locus">VS_1102</name>
</gene>
<comment type="function">
    <text evidence="1">Catalyzes the conversion of S-adenosyl-L-methionine (SAM) to carboxy-S-adenosyl-L-methionine (Cx-SAM).</text>
</comment>
<comment type="catalytic activity">
    <reaction evidence="1">
        <text>prephenate + S-adenosyl-L-methionine = carboxy-S-adenosyl-L-methionine + 3-phenylpyruvate + H2O</text>
        <dbReference type="Rhea" id="RHEA:51692"/>
        <dbReference type="ChEBI" id="CHEBI:15377"/>
        <dbReference type="ChEBI" id="CHEBI:18005"/>
        <dbReference type="ChEBI" id="CHEBI:29934"/>
        <dbReference type="ChEBI" id="CHEBI:59789"/>
        <dbReference type="ChEBI" id="CHEBI:134278"/>
    </reaction>
</comment>
<comment type="subunit">
    <text evidence="1">Homodimer.</text>
</comment>
<comment type="similarity">
    <text evidence="1">Belongs to the class I-like SAM-binding methyltransferase superfamily. Cx-SAM synthase family.</text>
</comment>
<feature type="chain" id="PRO_1000185690" description="Carboxy-S-adenosyl-L-methionine synthase">
    <location>
        <begin position="1"/>
        <end position="242"/>
    </location>
</feature>
<feature type="binding site" evidence="1">
    <location>
        <position position="39"/>
    </location>
    <ligand>
        <name>S-adenosyl-L-methionine</name>
        <dbReference type="ChEBI" id="CHEBI:59789"/>
    </ligand>
</feature>
<feature type="binding site" evidence="1">
    <location>
        <begin position="64"/>
        <end position="66"/>
    </location>
    <ligand>
        <name>S-adenosyl-L-methionine</name>
        <dbReference type="ChEBI" id="CHEBI:59789"/>
    </ligand>
</feature>
<feature type="binding site" evidence="1">
    <location>
        <begin position="89"/>
        <end position="90"/>
    </location>
    <ligand>
        <name>S-adenosyl-L-methionine</name>
        <dbReference type="ChEBI" id="CHEBI:59789"/>
    </ligand>
</feature>
<feature type="binding site" evidence="1">
    <location>
        <begin position="117"/>
        <end position="118"/>
    </location>
    <ligand>
        <name>S-adenosyl-L-methionine</name>
        <dbReference type="ChEBI" id="CHEBI:59789"/>
    </ligand>
</feature>
<feature type="binding site" evidence="1">
    <location>
        <position position="132"/>
    </location>
    <ligand>
        <name>S-adenosyl-L-methionine</name>
        <dbReference type="ChEBI" id="CHEBI:59789"/>
    </ligand>
</feature>
<feature type="binding site" evidence="1">
    <location>
        <position position="199"/>
    </location>
    <ligand>
        <name>S-adenosyl-L-methionine</name>
        <dbReference type="ChEBI" id="CHEBI:59789"/>
    </ligand>
</feature>
<protein>
    <recommendedName>
        <fullName evidence="1">Carboxy-S-adenosyl-L-methionine synthase</fullName>
        <shortName evidence="1">Cx-SAM synthase</shortName>
        <ecNumber evidence="1">2.1.3.-</ecNumber>
    </recommendedName>
</protein>
<keyword id="KW-0949">S-adenosyl-L-methionine</keyword>
<keyword id="KW-0808">Transferase</keyword>
<accession>B7VMH8</accession>
<organism>
    <name type="scientific">Vibrio atlanticus (strain LGP32)</name>
    <name type="common">Vibrio splendidus (strain Mel32)</name>
    <dbReference type="NCBI Taxonomy" id="575788"/>
    <lineage>
        <taxon>Bacteria</taxon>
        <taxon>Pseudomonadati</taxon>
        <taxon>Pseudomonadota</taxon>
        <taxon>Gammaproteobacteria</taxon>
        <taxon>Vibrionales</taxon>
        <taxon>Vibrionaceae</taxon>
        <taxon>Vibrio</taxon>
    </lineage>
</organism>
<name>CMOA_VIBA3</name>